<feature type="chain" id="PRO_0000405993" description="PHD finger protein MALE STERILITY 1">
    <location>
        <begin position="1"/>
        <end position="672"/>
    </location>
</feature>
<feature type="zinc finger region" description="PHD-type">
    <location>
        <begin position="614"/>
        <end position="664"/>
    </location>
</feature>
<feature type="mutagenesis site" description="Normal fertility." evidence="5">
    <original>E</original>
    <variation>K</variation>
    <location>
        <position position="627"/>
    </location>
</feature>
<feature type="mutagenesis site" description="Impaired fertility." evidence="5">
    <original>C</original>
    <variation>A</variation>
    <location>
        <position position="635"/>
    </location>
</feature>
<feature type="mutagenesis site" description="Impaired fertility; when associated with G-643." evidence="5">
    <original>H</original>
    <variation>N</variation>
    <location>
        <position position="640"/>
    </location>
</feature>
<feature type="mutagenesis site" description="Impaired fertility; when associated with N-640." evidence="5">
    <original>C</original>
    <variation>G</variation>
    <location>
        <position position="643"/>
    </location>
</feature>
<feature type="sequence conflict" description="In Ref. 1; CAC69663/CAC69664." evidence="9" ref="1">
    <original>S</original>
    <variation>G</variation>
    <location>
        <position position="412"/>
    </location>
</feature>
<protein>
    <recommendedName>
        <fullName>PHD finger protein MALE STERILITY 1</fullName>
    </recommendedName>
</protein>
<gene>
    <name type="primary">MS1</name>
    <name type="ordered locus">At5g22260</name>
    <name type="ORF">T6G21.3</name>
</gene>
<sequence length="672" mass="77004">MANLIRTDHQQHIPKKRKRGESRVFRLKTFGESGHPAEMNELSFRDNLAKLLEFGHFESSGLMGSWSFQLEIQRNPNPLYVLLFVVEEPIEASLNLRCNHCQYVGWGNQMICNKKYHFVIPSKETMAAFLKLEGGGYAFPEKESFSHLVELQGHVLHGFFHSNGFGHLLSLNGIETGSDLTGHQVMDLWDRLCTGLKARKIGLNDASHKKGMELRLLHGVAKGEPWFGRWGYRFGSGTYGVTQKIYEKALESVRNIPLCLLNHHLTSLNRETPILLSKYQSLSTEPLITLSDLFRFMLHLHSRLPRDNYMSNSRNQIISIDSTNCRWSQKRIQMAIKVVIESLKRVEYRWISRQEVRDAARNYIGDTGLLDFVLKSLGNQVVGNYLVRRSLNPVKKVLEYSLEDISNLLPSSNNELITLQNQNSMGKMATNGHNKITRGQVMKDMFYFYKHILMDYKGVLGPIGGILNQIGMASRAILDAKYFIKEYHYIRDTSAKTLHLDRGEELGIFCTIAWKCHHHNNEIKVPPQECIVVKKDATLSEVYGEAERVFRDIYWELRDVVVESVVGGQIEITRVDEMALNGNKGLVLEGNVGMMMNIEVTKCYEDDDKKKDKRIECECGATEEDGERMVCCDICEVWQHTRCVGVQHNEEVPRIFLCQSCDQHLIPLSFLP</sequence>
<name>MS1_ARATH</name>
<comment type="function">
    <text evidence="1 2 3 4 5 8">Transcriptional activator required for anther and post-meiotic pollen development and maturation. Seems to regulate inflorescence branching and floral development. May control tapetal development by directly regulating tapetal programmed cell death (PCD) and breakdown. Implicated in pollen cytosolic components and wall development (e.g. exine and intine formation).</text>
</comment>
<comment type="subcellular location">
    <subcellularLocation>
        <location evidence="2 4">Nucleus</location>
    </subcellularLocation>
</comment>
<comment type="tissue specificity">
    <text evidence="1">In closed flower buds, especially in anthers.</text>
</comment>
<comment type="developmental stage">
    <text evidence="1 2">Expressed at low levels in anthers from closed buds, with expression in the tapetum at the stage before microspore release from tetrads.</text>
</comment>
<comment type="induction">
    <text evidence="4 6 7">Self down-regulation. Regulated by SDG2 via chromatin methylation. Seems inducible by brassinosteroids via BES1.</text>
</comment>
<comment type="disruption phenotype">
    <text evidence="1 2 3 4 5 8">No production of viable pollen. Degeneration of pollen occurs soon after microspore release from the tetrads, at which time the tapetum also appears abnormally vacuolated. Abnormal presence of ultrastructural features of apoptosis (PCD) in microspores, but lack of normal PCD in tapetum. Disturbed inflorescence branching and floral development. Impaired cell wall modifications after primexine formation within the callose wall, accompanied by reduced internal intine wall.</text>
</comment>
<keyword id="KW-0010">Activator</keyword>
<keyword id="KW-0479">Metal-binding</keyword>
<keyword id="KW-0539">Nucleus</keyword>
<keyword id="KW-1185">Reference proteome</keyword>
<keyword id="KW-0804">Transcription</keyword>
<keyword id="KW-0805">Transcription regulation</keyword>
<keyword id="KW-0862">Zinc</keyword>
<keyword id="KW-0863">Zinc-finger</keyword>
<proteinExistence type="evidence at protein level"/>
<accession>Q9FMS5</accession>
<accession>Q93V55</accession>
<dbReference type="EMBL" id="AJ344209">
    <property type="protein sequence ID" value="CAC69663.1"/>
    <property type="molecule type" value="Genomic_DNA"/>
</dbReference>
<dbReference type="EMBL" id="AJ344210">
    <property type="protein sequence ID" value="CAC69664.1"/>
    <property type="molecule type" value="mRNA"/>
</dbReference>
<dbReference type="EMBL" id="AB007651">
    <property type="protein sequence ID" value="BAB08324.1"/>
    <property type="molecule type" value="Genomic_DNA"/>
</dbReference>
<dbReference type="EMBL" id="CP002688">
    <property type="protein sequence ID" value="AED93002.1"/>
    <property type="molecule type" value="Genomic_DNA"/>
</dbReference>
<dbReference type="RefSeq" id="NP_197618.1">
    <property type="nucleotide sequence ID" value="NM_122131.2"/>
</dbReference>
<dbReference type="SMR" id="Q9FMS5"/>
<dbReference type="STRING" id="3702.Q9FMS5"/>
<dbReference type="iPTMnet" id="Q9FMS5"/>
<dbReference type="PaxDb" id="3702-AT5G22260.1"/>
<dbReference type="EnsemblPlants" id="AT5G22260.1">
    <property type="protein sequence ID" value="AT5G22260.1"/>
    <property type="gene ID" value="AT5G22260"/>
</dbReference>
<dbReference type="GeneID" id="832286"/>
<dbReference type="Gramene" id="AT5G22260.1">
    <property type="protein sequence ID" value="AT5G22260.1"/>
    <property type="gene ID" value="AT5G22260"/>
</dbReference>
<dbReference type="KEGG" id="ath:AT5G22260"/>
<dbReference type="Araport" id="AT5G22260"/>
<dbReference type="TAIR" id="AT5G22260">
    <property type="gene designation" value="MS1"/>
</dbReference>
<dbReference type="eggNOG" id="KOG1844">
    <property type="taxonomic scope" value="Eukaryota"/>
</dbReference>
<dbReference type="HOGENOM" id="CLU_012141_0_0_1"/>
<dbReference type="InParanoid" id="Q9FMS5"/>
<dbReference type="OMA" id="EIYWGLR"/>
<dbReference type="PhylomeDB" id="Q9FMS5"/>
<dbReference type="PRO" id="PR:Q9FMS5"/>
<dbReference type="Proteomes" id="UP000006548">
    <property type="component" value="Chromosome 5"/>
</dbReference>
<dbReference type="ExpressionAtlas" id="Q9FMS5">
    <property type="expression patterns" value="differential"/>
</dbReference>
<dbReference type="GO" id="GO:0005634">
    <property type="term" value="C:nucleus"/>
    <property type="evidence" value="ECO:0000314"/>
    <property type="project" value="TAIR"/>
</dbReference>
<dbReference type="GO" id="GO:0008270">
    <property type="term" value="F:zinc ion binding"/>
    <property type="evidence" value="ECO:0007669"/>
    <property type="project" value="UniProtKB-KW"/>
</dbReference>
<dbReference type="GO" id="GO:0048655">
    <property type="term" value="P:anther wall tapetum morphogenesis"/>
    <property type="evidence" value="ECO:0000315"/>
    <property type="project" value="TAIR"/>
</dbReference>
<dbReference type="GO" id="GO:0071367">
    <property type="term" value="P:cellular response to brassinosteroid stimulus"/>
    <property type="evidence" value="ECO:0000270"/>
    <property type="project" value="UniProtKB"/>
</dbReference>
<dbReference type="GO" id="GO:0055046">
    <property type="term" value="P:microgametogenesis"/>
    <property type="evidence" value="ECO:0000315"/>
    <property type="project" value="TAIR"/>
</dbReference>
<dbReference type="GO" id="GO:0009846">
    <property type="term" value="P:pollen germination"/>
    <property type="evidence" value="ECO:0000315"/>
    <property type="project" value="TAIR"/>
</dbReference>
<dbReference type="GO" id="GO:0010208">
    <property type="term" value="P:pollen wall assembly"/>
    <property type="evidence" value="ECO:0000315"/>
    <property type="project" value="TAIR"/>
</dbReference>
<dbReference type="GO" id="GO:0045893">
    <property type="term" value="P:positive regulation of DNA-templated transcription"/>
    <property type="evidence" value="ECO:0000315"/>
    <property type="project" value="UniProtKB"/>
</dbReference>
<dbReference type="GO" id="GO:0043068">
    <property type="term" value="P:positive regulation of programmed cell death"/>
    <property type="evidence" value="ECO:0007669"/>
    <property type="project" value="EnsemblPlants"/>
</dbReference>
<dbReference type="GO" id="GO:0022414">
    <property type="term" value="P:reproductive process"/>
    <property type="evidence" value="ECO:0000315"/>
    <property type="project" value="CACAO"/>
</dbReference>
<dbReference type="CDD" id="cd15556">
    <property type="entry name" value="PHD_MMD1_like"/>
    <property type="match status" value="1"/>
</dbReference>
<dbReference type="Gene3D" id="3.30.40.10">
    <property type="entry name" value="Zinc/RING finger domain, C3HC4 (zinc finger)"/>
    <property type="match status" value="1"/>
</dbReference>
<dbReference type="InterPro" id="IPR019786">
    <property type="entry name" value="Zinc_finger_PHD-type_CS"/>
</dbReference>
<dbReference type="InterPro" id="IPR011011">
    <property type="entry name" value="Znf_FYVE_PHD"/>
</dbReference>
<dbReference type="InterPro" id="IPR001965">
    <property type="entry name" value="Znf_PHD"/>
</dbReference>
<dbReference type="InterPro" id="IPR019787">
    <property type="entry name" value="Znf_PHD-finger"/>
</dbReference>
<dbReference type="InterPro" id="IPR013083">
    <property type="entry name" value="Znf_RING/FYVE/PHD"/>
</dbReference>
<dbReference type="PANTHER" id="PTHR46201">
    <property type="entry name" value="PHD FINGER PROTEIN MALE MEIOCYTE DEATH 1-RELATED"/>
    <property type="match status" value="1"/>
</dbReference>
<dbReference type="PANTHER" id="PTHR46201:SF1">
    <property type="entry name" value="PHD FINGER PROTEIN MALE STERILITY 1"/>
    <property type="match status" value="1"/>
</dbReference>
<dbReference type="Pfam" id="PF00628">
    <property type="entry name" value="PHD"/>
    <property type="match status" value="1"/>
</dbReference>
<dbReference type="SMART" id="SM00249">
    <property type="entry name" value="PHD"/>
    <property type="match status" value="1"/>
</dbReference>
<dbReference type="SUPFAM" id="SSF57903">
    <property type="entry name" value="FYVE/PHD zinc finger"/>
    <property type="match status" value="1"/>
</dbReference>
<dbReference type="PROSITE" id="PS01359">
    <property type="entry name" value="ZF_PHD_1"/>
    <property type="match status" value="1"/>
</dbReference>
<reference key="1">
    <citation type="journal article" date="2001" name="Plant J.">
        <title>The Arabidopsis MALE STERILITY1 (MS1) gene is a transcriptional regulator of male gametogenesis, with homology to the PHD-finger family of transcription factors.</title>
        <authorList>
            <person name="Wilson Z.A."/>
            <person name="Morroll S.M."/>
            <person name="Dawson J."/>
            <person name="Swarup R."/>
            <person name="Tighe P.J."/>
        </authorList>
    </citation>
    <scope>NUCLEOTIDE SEQUENCE [GENOMIC DNA / MRNA]</scope>
    <scope>FUNCTION</scope>
    <scope>DISRUPTION PHENOTYPE</scope>
    <scope>TISSUE SPECIFICITY</scope>
    <scope>DEVELOPMENTAL STAGE</scope>
    <source>
        <strain>cv. Landsberg erecta</strain>
    </source>
</reference>
<reference key="2">
    <citation type="journal article" date="1997" name="DNA Res.">
        <title>Structural analysis of Arabidopsis thaliana chromosome 5. III. Sequence features of the regions of 1,191,918 bp covered by seventeen physically assigned P1 clones.</title>
        <authorList>
            <person name="Nakamura Y."/>
            <person name="Sato S."/>
            <person name="Kaneko T."/>
            <person name="Kotani H."/>
            <person name="Asamizu E."/>
            <person name="Miyajima N."/>
            <person name="Tabata S."/>
        </authorList>
    </citation>
    <scope>NUCLEOTIDE SEQUENCE [LARGE SCALE GENOMIC DNA]</scope>
    <source>
        <strain>cv. Columbia</strain>
    </source>
</reference>
<reference key="3">
    <citation type="journal article" date="2017" name="Plant J.">
        <title>Araport11: a complete reannotation of the Arabidopsis thaliana reference genome.</title>
        <authorList>
            <person name="Cheng C.Y."/>
            <person name="Krishnakumar V."/>
            <person name="Chan A.P."/>
            <person name="Thibaud-Nissen F."/>
            <person name="Schobel S."/>
            <person name="Town C.D."/>
        </authorList>
    </citation>
    <scope>GENOME REANNOTATION</scope>
    <source>
        <strain>cv. Columbia</strain>
    </source>
</reference>
<reference key="4">
    <citation type="journal article" date="1994" name="Plant Physiol.">
        <title>The fate of inflorescence meristems is controlled by developing fruits in Arabidopsis.</title>
        <authorList>
            <person name="Hensel L.L."/>
            <person name="Nelson M.A."/>
            <person name="Richmond T.A."/>
            <person name="Bleecker A.B."/>
        </authorList>
    </citation>
    <scope>FUNCTION</scope>
    <scope>DISRUPTION PHENOTYPE</scope>
    <source>
        <strain>cv. Landsberg erecta</strain>
    </source>
</reference>
<reference key="5">
    <citation type="journal article" date="2002" name="Plant Cell Physiol.">
        <title>The MALE STERILITY1 gene of Arabidopsis, encoding a nuclear protein with a PHD-finger motif, is expressed in tapetal cells and is required for pollen maturation.</title>
        <authorList>
            <person name="Ito T."/>
            <person name="Shinozaki K."/>
        </authorList>
    </citation>
    <scope>FUNCTION</scope>
    <scope>DISRUPTION PHENOTYPE</scope>
    <scope>DEVELOPMENTAL STAGE</scope>
    <scope>SUBCELLULAR LOCATION</scope>
    <source>
        <strain>cv. Landsberg erecta</strain>
    </source>
</reference>
<reference key="6">
    <citation type="journal article" date="2006" name="J. Exp. Bot.">
        <title>Altered tapetal PCD and pollen wall development in the Arabidopsis ms1 mutant.</title>
        <authorList>
            <person name="Vizcay-Barrena G."/>
            <person name="Wilson Z.A."/>
        </authorList>
    </citation>
    <scope>FUNCTION</scope>
    <scope>DISRUPTION PHENOTYPE</scope>
    <source>
        <strain>cv. Landsberg erecta</strain>
    </source>
</reference>
<reference key="7">
    <citation type="journal article" date="2007" name="Plant Cell">
        <title>MALE STERILITY1 is required for tapetal development and pollen wall biosynthesis.</title>
        <authorList>
            <person name="Yang C."/>
            <person name="Vizcay-Barrena G."/>
            <person name="Conner K."/>
            <person name="Wilson Z.A."/>
        </authorList>
    </citation>
    <scope>FUNCTION</scope>
    <scope>DISRUPTION PHENOTYPE</scope>
    <scope>INDUCTION</scope>
    <scope>AUTOREGULATION</scope>
    <scope>SUBCELLULAR LOCATION</scope>
    <source>
        <strain>cv. Landsberg erecta</strain>
    </source>
</reference>
<reference key="8">
    <citation type="journal article" date="2007" name="Plant Cell">
        <title>Arabidopsis MALE STERILITY1 encodes a PHD-type transcription factor and regulates pollen and tapetum development.</title>
        <authorList>
            <person name="Ito T."/>
            <person name="Nagata N."/>
            <person name="Yoshiba Y."/>
            <person name="Ohme-Takagi M."/>
            <person name="Ma H."/>
            <person name="Shinozaki K."/>
        </authorList>
    </citation>
    <scope>FUNCTION</scope>
    <scope>DISRUPTION PHENOTYPE</scope>
    <scope>MUTAGENESIS OF GLU-627; CYS-635; HIS-640 AND CYS-643</scope>
</reference>
<reference key="9">
    <citation type="journal article" date="2010" name="Plant Cell">
        <title>Arabidopsis SET DOMAIN GROUP2 is required for H3K4 trimethylation and is crucial for both sporophyte and gametophyte development.</title>
        <authorList>
            <person name="Berr A."/>
            <person name="McCallum E.J."/>
            <person name="Menard R."/>
            <person name="Meyer D."/>
            <person name="Fuchs J."/>
            <person name="Dong A."/>
            <person name="Shen W.H."/>
        </authorList>
    </citation>
    <scope>INDUCTION BY SDG2</scope>
</reference>
<reference key="10">
    <citation type="journal article" date="2010" name="Proc. Natl. Acad. Sci. U.S.A.">
        <title>Brassinosteroids control male fertility by regulating the expression of key genes involved in Arabidopsis anther and pollen development.</title>
        <authorList>
            <person name="Ye Q."/>
            <person name="Zhu W."/>
            <person name="Li L."/>
            <person name="Zhang S."/>
            <person name="Yin Y."/>
            <person name="Ma H."/>
            <person name="Wang X."/>
        </authorList>
    </citation>
    <scope>INDUCTION BY BRASSINOSTEROIDS AND BES1</scope>
</reference>
<organism>
    <name type="scientific">Arabidopsis thaliana</name>
    <name type="common">Mouse-ear cress</name>
    <dbReference type="NCBI Taxonomy" id="3702"/>
    <lineage>
        <taxon>Eukaryota</taxon>
        <taxon>Viridiplantae</taxon>
        <taxon>Streptophyta</taxon>
        <taxon>Embryophyta</taxon>
        <taxon>Tracheophyta</taxon>
        <taxon>Spermatophyta</taxon>
        <taxon>Magnoliopsida</taxon>
        <taxon>eudicotyledons</taxon>
        <taxon>Gunneridae</taxon>
        <taxon>Pentapetalae</taxon>
        <taxon>rosids</taxon>
        <taxon>malvids</taxon>
        <taxon>Brassicales</taxon>
        <taxon>Brassicaceae</taxon>
        <taxon>Camelineae</taxon>
        <taxon>Arabidopsis</taxon>
    </lineage>
</organism>
<evidence type="ECO:0000269" key="1">
    <source>
    </source>
</evidence>
<evidence type="ECO:0000269" key="2">
    <source>
    </source>
</evidence>
<evidence type="ECO:0000269" key="3">
    <source>
    </source>
</evidence>
<evidence type="ECO:0000269" key="4">
    <source>
    </source>
</evidence>
<evidence type="ECO:0000269" key="5">
    <source>
    </source>
</evidence>
<evidence type="ECO:0000269" key="6">
    <source>
    </source>
</evidence>
<evidence type="ECO:0000269" key="7">
    <source>
    </source>
</evidence>
<evidence type="ECO:0000269" key="8">
    <source>
    </source>
</evidence>
<evidence type="ECO:0000305" key="9"/>